<proteinExistence type="inferred from homology"/>
<reference key="1">
    <citation type="submission" date="2008-04" db="EMBL/GenBank/DDBJ databases">
        <title>Complete sequence of Yersinia pseudotuberculosis PB1/+.</title>
        <authorList>
            <person name="Copeland A."/>
            <person name="Lucas S."/>
            <person name="Lapidus A."/>
            <person name="Glavina del Rio T."/>
            <person name="Dalin E."/>
            <person name="Tice H."/>
            <person name="Bruce D."/>
            <person name="Goodwin L."/>
            <person name="Pitluck S."/>
            <person name="Munk A.C."/>
            <person name="Brettin T."/>
            <person name="Detter J.C."/>
            <person name="Han C."/>
            <person name="Tapia R."/>
            <person name="Schmutz J."/>
            <person name="Larimer F."/>
            <person name="Land M."/>
            <person name="Hauser L."/>
            <person name="Challacombe J.F."/>
            <person name="Green L."/>
            <person name="Lindler L.E."/>
            <person name="Nikolich M.P."/>
            <person name="Richardson P."/>
        </authorList>
    </citation>
    <scope>NUCLEOTIDE SEQUENCE [LARGE SCALE GENOMIC DNA]</scope>
    <source>
        <strain>PB1/+</strain>
    </source>
</reference>
<protein>
    <recommendedName>
        <fullName evidence="1">Glycine cleavage system H protein</fullName>
    </recommendedName>
</protein>
<name>GCSH_YERPB</name>
<accession>B2K0Q4</accession>
<comment type="function">
    <text evidence="1">The glycine cleavage system catalyzes the degradation of glycine. The H protein shuttles the methylamine group of glycine from the P protein to the T protein.</text>
</comment>
<comment type="cofactor">
    <cofactor evidence="1">
        <name>(R)-lipoate</name>
        <dbReference type="ChEBI" id="CHEBI:83088"/>
    </cofactor>
    <text evidence="1">Binds 1 lipoyl cofactor covalently.</text>
</comment>
<comment type="subunit">
    <text evidence="1">The glycine cleavage system is composed of four proteins: P, T, L and H.</text>
</comment>
<comment type="similarity">
    <text evidence="1">Belongs to the GcvH family.</text>
</comment>
<sequence length="128" mass="13581">MSNVPTELKYALSHEWVRADGDGVYSVGITEHAQELLGDMVFVDLPEVGSDVSAGSDCAVAESVKAASDIYAPISGEIVAVNTELENSPELVNSAPYTDGWLFSIKAADESELDNLLDADAYLAAIEE</sequence>
<evidence type="ECO:0000255" key="1">
    <source>
        <dbReference type="HAMAP-Rule" id="MF_00272"/>
    </source>
</evidence>
<evidence type="ECO:0000255" key="2">
    <source>
        <dbReference type="PROSITE-ProRule" id="PRU01066"/>
    </source>
</evidence>
<organism>
    <name type="scientific">Yersinia pseudotuberculosis serotype IB (strain PB1/+)</name>
    <dbReference type="NCBI Taxonomy" id="502801"/>
    <lineage>
        <taxon>Bacteria</taxon>
        <taxon>Pseudomonadati</taxon>
        <taxon>Pseudomonadota</taxon>
        <taxon>Gammaproteobacteria</taxon>
        <taxon>Enterobacterales</taxon>
        <taxon>Yersiniaceae</taxon>
        <taxon>Yersinia</taxon>
    </lineage>
</organism>
<gene>
    <name evidence="1" type="primary">gcvH</name>
    <name type="ordered locus">YPTS_3312</name>
</gene>
<dbReference type="EMBL" id="CP001048">
    <property type="protein sequence ID" value="ACC90267.1"/>
    <property type="molecule type" value="Genomic_DNA"/>
</dbReference>
<dbReference type="RefSeq" id="WP_002209948.1">
    <property type="nucleotide sequence ID" value="NZ_CP009780.1"/>
</dbReference>
<dbReference type="SMR" id="B2K0Q4"/>
<dbReference type="GeneID" id="57973734"/>
<dbReference type="KEGG" id="ypb:YPTS_3312"/>
<dbReference type="PATRIC" id="fig|502801.10.peg.2753"/>
<dbReference type="GO" id="GO:0005829">
    <property type="term" value="C:cytosol"/>
    <property type="evidence" value="ECO:0007669"/>
    <property type="project" value="TreeGrafter"/>
</dbReference>
<dbReference type="GO" id="GO:0005960">
    <property type="term" value="C:glycine cleavage complex"/>
    <property type="evidence" value="ECO:0007669"/>
    <property type="project" value="InterPro"/>
</dbReference>
<dbReference type="GO" id="GO:0019464">
    <property type="term" value="P:glycine decarboxylation via glycine cleavage system"/>
    <property type="evidence" value="ECO:0007669"/>
    <property type="project" value="UniProtKB-UniRule"/>
</dbReference>
<dbReference type="CDD" id="cd06848">
    <property type="entry name" value="GCS_H"/>
    <property type="match status" value="1"/>
</dbReference>
<dbReference type="FunFam" id="2.40.50.100:FF:000011">
    <property type="entry name" value="Glycine cleavage system H protein"/>
    <property type="match status" value="1"/>
</dbReference>
<dbReference type="Gene3D" id="2.40.50.100">
    <property type="match status" value="1"/>
</dbReference>
<dbReference type="HAMAP" id="MF_00272">
    <property type="entry name" value="GcvH"/>
    <property type="match status" value="1"/>
</dbReference>
<dbReference type="InterPro" id="IPR003016">
    <property type="entry name" value="2-oxoA_DH_lipoyl-BS"/>
</dbReference>
<dbReference type="InterPro" id="IPR000089">
    <property type="entry name" value="Biotin_lipoyl"/>
</dbReference>
<dbReference type="InterPro" id="IPR002930">
    <property type="entry name" value="GCV_H"/>
</dbReference>
<dbReference type="InterPro" id="IPR033753">
    <property type="entry name" value="GCV_H/Fam206"/>
</dbReference>
<dbReference type="InterPro" id="IPR017453">
    <property type="entry name" value="GCV_H_sub"/>
</dbReference>
<dbReference type="InterPro" id="IPR011053">
    <property type="entry name" value="Single_hybrid_motif"/>
</dbReference>
<dbReference type="NCBIfam" id="TIGR00527">
    <property type="entry name" value="gcvH"/>
    <property type="match status" value="1"/>
</dbReference>
<dbReference type="NCBIfam" id="NF002270">
    <property type="entry name" value="PRK01202.1"/>
    <property type="match status" value="1"/>
</dbReference>
<dbReference type="PANTHER" id="PTHR11715">
    <property type="entry name" value="GLYCINE CLEAVAGE SYSTEM H PROTEIN"/>
    <property type="match status" value="1"/>
</dbReference>
<dbReference type="PANTHER" id="PTHR11715:SF3">
    <property type="entry name" value="GLYCINE CLEAVAGE SYSTEM H PROTEIN-RELATED"/>
    <property type="match status" value="1"/>
</dbReference>
<dbReference type="Pfam" id="PF01597">
    <property type="entry name" value="GCV_H"/>
    <property type="match status" value="1"/>
</dbReference>
<dbReference type="SUPFAM" id="SSF51230">
    <property type="entry name" value="Single hybrid motif"/>
    <property type="match status" value="1"/>
</dbReference>
<dbReference type="PROSITE" id="PS50968">
    <property type="entry name" value="BIOTINYL_LIPOYL"/>
    <property type="match status" value="1"/>
</dbReference>
<dbReference type="PROSITE" id="PS00189">
    <property type="entry name" value="LIPOYL"/>
    <property type="match status" value="1"/>
</dbReference>
<feature type="chain" id="PRO_1000114565" description="Glycine cleavage system H protein">
    <location>
        <begin position="1"/>
        <end position="128"/>
    </location>
</feature>
<feature type="domain" description="Lipoyl-binding" evidence="2">
    <location>
        <begin position="24"/>
        <end position="106"/>
    </location>
</feature>
<feature type="modified residue" description="N6-lipoyllysine" evidence="1">
    <location>
        <position position="65"/>
    </location>
</feature>
<keyword id="KW-0450">Lipoyl</keyword>